<keyword id="KW-0067">ATP-binding</keyword>
<keyword id="KW-0347">Helicase</keyword>
<keyword id="KW-0378">Hydrolase</keyword>
<keyword id="KW-0547">Nucleotide-binding</keyword>
<keyword id="KW-1185">Reference proteome</keyword>
<gene>
    <name evidence="6" type="primary">CFL1</name>
    <name evidence="9" type="ordered locus">At2g33510</name>
    <name evidence="10" type="ORF">F4P9.28</name>
</gene>
<reference key="1">
    <citation type="journal article" date="1999" name="Nature">
        <title>Sequence and analysis of chromosome 2 of the plant Arabidopsis thaliana.</title>
        <authorList>
            <person name="Lin X."/>
            <person name="Kaul S."/>
            <person name="Rounsley S.D."/>
            <person name="Shea T.P."/>
            <person name="Benito M.-I."/>
            <person name="Town C.D."/>
            <person name="Fujii C.Y."/>
            <person name="Mason T.M."/>
            <person name="Bowman C.L."/>
            <person name="Barnstead M.E."/>
            <person name="Feldblyum T.V."/>
            <person name="Buell C.R."/>
            <person name="Ketchum K.A."/>
            <person name="Lee J.J."/>
            <person name="Ronning C.M."/>
            <person name="Koo H.L."/>
            <person name="Moffat K.S."/>
            <person name="Cronin L.A."/>
            <person name="Shen M."/>
            <person name="Pai G."/>
            <person name="Van Aken S."/>
            <person name="Umayam L."/>
            <person name="Tallon L.J."/>
            <person name="Gill J.E."/>
            <person name="Adams M.D."/>
            <person name="Carrera A.J."/>
            <person name="Creasy T.H."/>
            <person name="Goodman H.M."/>
            <person name="Somerville C.R."/>
            <person name="Copenhaver G.P."/>
            <person name="Preuss D."/>
            <person name="Nierman W.C."/>
            <person name="White O."/>
            <person name="Eisen J.A."/>
            <person name="Salzberg S.L."/>
            <person name="Fraser C.M."/>
            <person name="Venter J.C."/>
        </authorList>
    </citation>
    <scope>NUCLEOTIDE SEQUENCE [LARGE SCALE GENOMIC DNA]</scope>
    <source>
        <strain>cv. Columbia</strain>
    </source>
</reference>
<reference key="2">
    <citation type="journal article" date="2017" name="Plant J.">
        <title>Araport11: a complete reannotation of the Arabidopsis thaliana reference genome.</title>
        <authorList>
            <person name="Cheng C.Y."/>
            <person name="Krishnakumar V."/>
            <person name="Chan A.P."/>
            <person name="Thibaud-Nissen F."/>
            <person name="Schobel S."/>
            <person name="Town C.D."/>
        </authorList>
    </citation>
    <scope>GENOME REANNOTATION</scope>
    <source>
        <strain>cv. Columbia</strain>
    </source>
</reference>
<reference key="3">
    <citation type="journal article" date="2003" name="Science">
        <title>Empirical analysis of transcriptional activity in the Arabidopsis genome.</title>
        <authorList>
            <person name="Yamada K."/>
            <person name="Lim J."/>
            <person name="Dale J.M."/>
            <person name="Chen H."/>
            <person name="Shinn P."/>
            <person name="Palm C.J."/>
            <person name="Southwick A.M."/>
            <person name="Wu H.C."/>
            <person name="Kim C.J."/>
            <person name="Nguyen M."/>
            <person name="Pham P.K."/>
            <person name="Cheuk R.F."/>
            <person name="Karlin-Newmann G."/>
            <person name="Liu S.X."/>
            <person name="Lam B."/>
            <person name="Sakano H."/>
            <person name="Wu T."/>
            <person name="Yu G."/>
            <person name="Miranda M."/>
            <person name="Quach H.L."/>
            <person name="Tripp M."/>
            <person name="Chang C.H."/>
            <person name="Lee J.M."/>
            <person name="Toriumi M.J."/>
            <person name="Chan M.M."/>
            <person name="Tang C.C."/>
            <person name="Onodera C.S."/>
            <person name="Deng J.M."/>
            <person name="Akiyama K."/>
            <person name="Ansari Y."/>
            <person name="Arakawa T."/>
            <person name="Banh J."/>
            <person name="Banno F."/>
            <person name="Bowser L."/>
            <person name="Brooks S.Y."/>
            <person name="Carninci P."/>
            <person name="Chao Q."/>
            <person name="Choy N."/>
            <person name="Enju A."/>
            <person name="Goldsmith A.D."/>
            <person name="Gurjal M."/>
            <person name="Hansen N.F."/>
            <person name="Hayashizaki Y."/>
            <person name="Johnson-Hopson C."/>
            <person name="Hsuan V.W."/>
            <person name="Iida K."/>
            <person name="Karnes M."/>
            <person name="Khan S."/>
            <person name="Koesema E."/>
            <person name="Ishida J."/>
            <person name="Jiang P.X."/>
            <person name="Jones T."/>
            <person name="Kawai J."/>
            <person name="Kamiya A."/>
            <person name="Meyers C."/>
            <person name="Nakajima M."/>
            <person name="Narusaka M."/>
            <person name="Seki M."/>
            <person name="Sakurai T."/>
            <person name="Satou M."/>
            <person name="Tamse R."/>
            <person name="Vaysberg M."/>
            <person name="Wallender E.K."/>
            <person name="Wong C."/>
            <person name="Yamamura Y."/>
            <person name="Yuan S."/>
            <person name="Shinozaki K."/>
            <person name="Davis R.W."/>
            <person name="Theologis A."/>
            <person name="Ecker J.R."/>
        </authorList>
    </citation>
    <scope>NUCLEOTIDE SEQUENCE [LARGE SCALE MRNA]</scope>
    <source>
        <strain>cv. Columbia</strain>
    </source>
</reference>
<reference key="4">
    <citation type="submission" date="2005-01" db="EMBL/GenBank/DDBJ databases">
        <title>Arabidopsis ORF clones.</title>
        <authorList>
            <person name="Kim C.J."/>
            <person name="Chen H."/>
            <person name="Cheuk R.F."/>
            <person name="Shinn P."/>
            <person name="Ecker J.R."/>
        </authorList>
    </citation>
    <scope>NUCLEOTIDE SEQUENCE [LARGE SCALE MRNA]</scope>
    <source>
        <strain>cv. Columbia</strain>
    </source>
</reference>
<reference key="5">
    <citation type="journal article" date="2011" name="Plant Cell">
        <title>CFL1, a WW domain protein, regulates cuticle development by modulating the function of HDG1, a class IV homeodomain transcription factor, in rice and Arabidopsis.</title>
        <authorList>
            <person name="Wu R."/>
            <person name="Li S."/>
            <person name="He S."/>
            <person name="Wassmann F."/>
            <person name="Yu C."/>
            <person name="Qin G."/>
            <person name="Schreiber L."/>
            <person name="Qu L.-J."/>
            <person name="Gu H."/>
        </authorList>
    </citation>
    <scope>FUNCTION</scope>
    <scope>DISRUPTION PHENOTYPE</scope>
    <scope>TISSUE SPECIFICITY</scope>
    <scope>DEVELOPMENTAL STAGE</scope>
    <scope>INTERACTION WITH HDG1</scope>
    <scope>GENE FAMILY</scope>
    <source>
        <strain>cv. Columbia</strain>
    </source>
</reference>
<reference key="6">
    <citation type="journal article" date="2016" name="PLoS Genet.">
        <title>CFLAP1 and CFLAP2 are two bHLH transcription factors participating in synergistic regulation of AtCFL1-mediated cuticle development in Arabidopsis.</title>
        <authorList>
            <person name="Li S."/>
            <person name="Wang X."/>
            <person name="He S."/>
            <person name="Li J."/>
            <person name="Huang Q."/>
            <person name="Imaizumi T."/>
            <person name="Qu L."/>
            <person name="Qin G."/>
            <person name="Qu L.-J."/>
            <person name="Gu H."/>
        </authorList>
    </citation>
    <scope>FUNCTION</scope>
    <scope>DISRUPTION PHENOTYPE</scope>
    <scope>INTERACTION WITH BHLH122/CFLAP1 AND BHLH80/CFLAP2</scope>
    <source>
        <strain>cv. Columbia</strain>
    </source>
</reference>
<proteinExistence type="evidence at protein level"/>
<protein>
    <recommendedName>
        <fullName evidence="6">Protein CURLY FLAG LEAF 1</fullName>
        <shortName evidence="6 7">AtCFL1</shortName>
    </recommendedName>
</protein>
<name>CFL1_ARATH</name>
<feature type="chain" id="PRO_0000456302" description="Protein CURLY FLAG LEAF 1">
    <location>
        <begin position="1"/>
        <end position="189"/>
    </location>
</feature>
<feature type="domain" description="WW" evidence="2">
    <location>
        <begin position="57"/>
        <end position="91"/>
    </location>
</feature>
<feature type="region of interest" description="Disordered" evidence="3">
    <location>
        <begin position="90"/>
        <end position="148"/>
    </location>
</feature>
<feature type="short sequence motif" description="EAR" evidence="1">
    <location>
        <begin position="50"/>
        <end position="55"/>
    </location>
</feature>
<feature type="compositionally biased region" description="Acidic residues" evidence="3">
    <location>
        <begin position="108"/>
        <end position="121"/>
    </location>
</feature>
<feature type="compositionally biased region" description="Acidic residues" evidence="3">
    <location>
        <begin position="135"/>
        <end position="148"/>
    </location>
</feature>
<feature type="sequence conflict" description="In Ref. 3; AAO42247." evidence="8" ref="3">
    <original>D</original>
    <variation>G</variation>
    <location>
        <position position="88"/>
    </location>
</feature>
<organism>
    <name type="scientific">Arabidopsis thaliana</name>
    <name type="common">Mouse-ear cress</name>
    <dbReference type="NCBI Taxonomy" id="3702"/>
    <lineage>
        <taxon>Eukaryota</taxon>
        <taxon>Viridiplantae</taxon>
        <taxon>Streptophyta</taxon>
        <taxon>Embryophyta</taxon>
        <taxon>Tracheophyta</taxon>
        <taxon>Spermatophyta</taxon>
        <taxon>Magnoliopsida</taxon>
        <taxon>eudicotyledons</taxon>
        <taxon>Gunneridae</taxon>
        <taxon>Pentapetalae</taxon>
        <taxon>rosids</taxon>
        <taxon>malvids</taxon>
        <taxon>Brassicales</taxon>
        <taxon>Brassicaceae</taxon>
        <taxon>Camelineae</taxon>
        <taxon>Arabidopsis</taxon>
    </lineage>
</organism>
<sequence>MKAPNMETITESLEKSMMNCSLNDRRRRVVGDGFGRSSSNEHMTPISDRTLELNSHLSLPCHWEQCLDLKTGEIYYINWKNGMRVKEDPRKVMNADPDSGDSYGTVCSEEDSSYYDSEESSSESSPSSRENHKEEEEEEEEEEEEEEDVLVVAGCKACFMYFMVPKLVEDCPKCAAQLLHFDRPHSASS</sequence>
<evidence type="ECO:0000250" key="1">
    <source>
        <dbReference type="UniProtKB" id="Q9SRN4"/>
    </source>
</evidence>
<evidence type="ECO:0000255" key="2">
    <source>
        <dbReference type="PROSITE-ProRule" id="PRU00224"/>
    </source>
</evidence>
<evidence type="ECO:0000256" key="3">
    <source>
        <dbReference type="SAM" id="MobiDB-lite"/>
    </source>
</evidence>
<evidence type="ECO:0000269" key="4">
    <source>
    </source>
</evidence>
<evidence type="ECO:0000269" key="5">
    <source>
    </source>
</evidence>
<evidence type="ECO:0000303" key="6">
    <source>
    </source>
</evidence>
<evidence type="ECO:0000303" key="7">
    <source>
    </source>
</evidence>
<evidence type="ECO:0000305" key="8"/>
<evidence type="ECO:0000312" key="9">
    <source>
        <dbReference type="Araport" id="AT2G33510"/>
    </source>
</evidence>
<evidence type="ECO:0000312" key="10">
    <source>
        <dbReference type="EMBL" id="AAB80668.1"/>
    </source>
</evidence>
<dbReference type="EMBL" id="AC002332">
    <property type="protein sequence ID" value="AAB80668.1"/>
    <property type="status" value="ALT_INIT"/>
    <property type="molecule type" value="Genomic_DNA"/>
</dbReference>
<dbReference type="EMBL" id="CP002685">
    <property type="protein sequence ID" value="AEC08846.1"/>
    <property type="molecule type" value="Genomic_DNA"/>
</dbReference>
<dbReference type="EMBL" id="BT004232">
    <property type="protein sequence ID" value="AAO42247.1"/>
    <property type="molecule type" value="mRNA"/>
</dbReference>
<dbReference type="EMBL" id="BT020470">
    <property type="protein sequence ID" value="AAW38971.1"/>
    <property type="molecule type" value="mRNA"/>
</dbReference>
<dbReference type="PIR" id="D84746">
    <property type="entry name" value="D84746"/>
</dbReference>
<dbReference type="RefSeq" id="NP_180909.2">
    <property type="nucleotide sequence ID" value="NM_128911.3"/>
</dbReference>
<dbReference type="SMR" id="Q5HZ54"/>
<dbReference type="FunCoup" id="Q5HZ54">
    <property type="interactions" value="1268"/>
</dbReference>
<dbReference type="iPTMnet" id="Q5HZ54"/>
<dbReference type="ProteomicsDB" id="185762"/>
<dbReference type="EnsemblPlants" id="AT2G33510.1">
    <property type="protein sequence ID" value="AT2G33510.1"/>
    <property type="gene ID" value="AT2G33510"/>
</dbReference>
<dbReference type="GeneID" id="817916"/>
<dbReference type="Gramene" id="AT2G33510.1">
    <property type="protein sequence ID" value="AT2G33510.1"/>
    <property type="gene ID" value="AT2G33510"/>
</dbReference>
<dbReference type="KEGG" id="ath:AT2G33510"/>
<dbReference type="Araport" id="AT2G33510"/>
<dbReference type="TAIR" id="AT2G33510">
    <property type="gene designation" value="CFL1"/>
</dbReference>
<dbReference type="OMA" id="MRVSEDP"/>
<dbReference type="PRO" id="PR:Q5HZ54"/>
<dbReference type="Proteomes" id="UP000006548">
    <property type="component" value="Chromosome 2"/>
</dbReference>
<dbReference type="ExpressionAtlas" id="Q5HZ54">
    <property type="expression patterns" value="baseline and differential"/>
</dbReference>
<dbReference type="GO" id="GO:0005524">
    <property type="term" value="F:ATP binding"/>
    <property type="evidence" value="ECO:0007669"/>
    <property type="project" value="UniProtKB-KW"/>
</dbReference>
<dbReference type="GO" id="GO:0004386">
    <property type="term" value="F:helicase activity"/>
    <property type="evidence" value="ECO:0007669"/>
    <property type="project" value="UniProtKB-KW"/>
</dbReference>
<dbReference type="GO" id="GO:0016787">
    <property type="term" value="F:hydrolase activity"/>
    <property type="evidence" value="ECO:0007669"/>
    <property type="project" value="UniProtKB-KW"/>
</dbReference>
<dbReference type="GO" id="GO:0042335">
    <property type="term" value="P:cuticle development"/>
    <property type="evidence" value="ECO:0000315"/>
    <property type="project" value="UniProtKB"/>
</dbReference>
<dbReference type="Gene3D" id="2.20.70.10">
    <property type="match status" value="1"/>
</dbReference>
<dbReference type="InterPro" id="IPR036020">
    <property type="entry name" value="WW_dom_sf"/>
</dbReference>
<dbReference type="InterPro" id="IPR051105">
    <property type="entry name" value="WWC/KIBRA_Hippo_Reg"/>
</dbReference>
<dbReference type="PANTHER" id="PTHR14791">
    <property type="entry name" value="BOMB/KIRA PROTEINS"/>
    <property type="match status" value="1"/>
</dbReference>
<dbReference type="PANTHER" id="PTHR14791:SF29">
    <property type="entry name" value="PROTEIN KIBRA"/>
    <property type="match status" value="1"/>
</dbReference>
<dbReference type="SUPFAM" id="SSF51045">
    <property type="entry name" value="WW domain"/>
    <property type="match status" value="1"/>
</dbReference>
<accession>Q5HZ54</accession>
<accession>O22801</accession>
<accession>Q84W47</accession>
<comment type="function">
    <text evidence="4 5">Negatively regulates the cuticle development by interacting with the HD-ZIP IV transcription factor HDG1.</text>
</comment>
<comment type="subunit">
    <text evidence="4 5">Interacts with BHLH122/CFLAP1 and BHLH80/CFLAP2 (PubMed:26745719). Binds to HDG1 (PubMed:21954461).</text>
</comment>
<comment type="tissue specificity">
    <text evidence="4">Mostly observed in roots, flowers and siliques (PubMed:21954461). Expressed in cells differentiated from epidermal cells such as trichomes, stigmatic papillar cells and guard cells, as well as in tissues undergoing abscission and dehiscence (PubMed:21954461).</text>
</comment>
<comment type="developmental stage">
    <text evidence="4">Expressed in seedlings and all organs of adult plants (PubMed:21954461). In roots, present in endodermis and central cylinder (PubMed:21954461). In flowers, detected in stigmatic papillar cells (PubMed:21954461). When petals and sepals are withering, accumulates in the abscission zone at the bottom of the silique (PubMed:21954461). Later observed along the valve margin-replum boundary, where dehiscence and pod shatter occur (PubMed:21954461).</text>
</comment>
<comment type="disruption phenotype">
    <text evidence="5">Increased cuticle development leading to ectopic cuticle biosynthesis in trichomes.</text>
</comment>
<comment type="sequence caution" evidence="8">
    <conflict type="erroneous initiation">
        <sequence resource="EMBL-CDS" id="AAB80668"/>
    </conflict>
    <text>Truncated N-terminus.</text>
</comment>